<sequence>MAGFWSKLFSSEEKPSSAQTAKDRLKVIVASEQGLGRRLSQDKIDQMKKEIMQVVSRYVSGVGEQHIQMQVRSEANIEMLEMNINLPEER</sequence>
<accession>B7I7T5</accession>
<evidence type="ECO:0000255" key="1">
    <source>
        <dbReference type="HAMAP-Rule" id="MF_00262"/>
    </source>
</evidence>
<evidence type="ECO:0000256" key="2">
    <source>
        <dbReference type="SAM" id="MobiDB-lite"/>
    </source>
</evidence>
<gene>
    <name evidence="1" type="primary">minE</name>
    <name type="ordered locus">AB57_0927</name>
</gene>
<organism>
    <name type="scientific">Acinetobacter baumannii (strain AB0057)</name>
    <dbReference type="NCBI Taxonomy" id="480119"/>
    <lineage>
        <taxon>Bacteria</taxon>
        <taxon>Pseudomonadati</taxon>
        <taxon>Pseudomonadota</taxon>
        <taxon>Gammaproteobacteria</taxon>
        <taxon>Moraxellales</taxon>
        <taxon>Moraxellaceae</taxon>
        <taxon>Acinetobacter</taxon>
        <taxon>Acinetobacter calcoaceticus/baumannii complex</taxon>
    </lineage>
</organism>
<feature type="chain" id="PRO_1000191264" description="Cell division topological specificity factor">
    <location>
        <begin position="1"/>
        <end position="90"/>
    </location>
</feature>
<feature type="region of interest" description="Disordered" evidence="2">
    <location>
        <begin position="1"/>
        <end position="21"/>
    </location>
</feature>
<feature type="compositionally biased region" description="Basic and acidic residues" evidence="2">
    <location>
        <begin position="10"/>
        <end position="21"/>
    </location>
</feature>
<keyword id="KW-0131">Cell cycle</keyword>
<keyword id="KW-0132">Cell division</keyword>
<reference key="1">
    <citation type="journal article" date="2008" name="J. Bacteriol.">
        <title>Comparative genome sequence analysis of multidrug-resistant Acinetobacter baumannii.</title>
        <authorList>
            <person name="Adams M.D."/>
            <person name="Goglin K."/>
            <person name="Molyneaux N."/>
            <person name="Hujer K.M."/>
            <person name="Lavender H."/>
            <person name="Jamison J.J."/>
            <person name="MacDonald I.J."/>
            <person name="Martin K.M."/>
            <person name="Russo T."/>
            <person name="Campagnari A.A."/>
            <person name="Hujer A.M."/>
            <person name="Bonomo R.A."/>
            <person name="Gill S.R."/>
        </authorList>
    </citation>
    <scope>NUCLEOTIDE SEQUENCE [LARGE SCALE GENOMIC DNA]</scope>
    <source>
        <strain>AB0057</strain>
    </source>
</reference>
<protein>
    <recommendedName>
        <fullName evidence="1">Cell division topological specificity factor</fullName>
    </recommendedName>
</protein>
<comment type="function">
    <text evidence="1">Prevents the cell division inhibition by proteins MinC and MinD at internal division sites while permitting inhibition at polar sites. This ensures cell division at the proper site by restricting the formation of a division septum at the midpoint of the long axis of the cell.</text>
</comment>
<comment type="similarity">
    <text evidence="1">Belongs to the MinE family.</text>
</comment>
<proteinExistence type="inferred from homology"/>
<name>MINE_ACIB5</name>
<dbReference type="EMBL" id="CP001182">
    <property type="protein sequence ID" value="ACJ40719.1"/>
    <property type="molecule type" value="Genomic_DNA"/>
</dbReference>
<dbReference type="RefSeq" id="WP_000896934.1">
    <property type="nucleotide sequence ID" value="NC_011586.2"/>
</dbReference>
<dbReference type="GeneID" id="9383489"/>
<dbReference type="KEGG" id="abn:AB57_0927"/>
<dbReference type="HOGENOM" id="CLU_137929_2_3_6"/>
<dbReference type="Proteomes" id="UP000007094">
    <property type="component" value="Chromosome"/>
</dbReference>
<dbReference type="GO" id="GO:0051301">
    <property type="term" value="P:cell division"/>
    <property type="evidence" value="ECO:0007669"/>
    <property type="project" value="UniProtKB-KW"/>
</dbReference>
<dbReference type="GO" id="GO:0032955">
    <property type="term" value="P:regulation of division septum assembly"/>
    <property type="evidence" value="ECO:0007669"/>
    <property type="project" value="InterPro"/>
</dbReference>
<dbReference type="Gene3D" id="3.30.1070.10">
    <property type="entry name" value="Cell division topological specificity factor MinE"/>
    <property type="match status" value="1"/>
</dbReference>
<dbReference type="HAMAP" id="MF_00262">
    <property type="entry name" value="MinE"/>
    <property type="match status" value="1"/>
</dbReference>
<dbReference type="InterPro" id="IPR005527">
    <property type="entry name" value="MinE"/>
</dbReference>
<dbReference type="InterPro" id="IPR036707">
    <property type="entry name" value="MinE_sf"/>
</dbReference>
<dbReference type="NCBIfam" id="TIGR01215">
    <property type="entry name" value="minE"/>
    <property type="match status" value="1"/>
</dbReference>
<dbReference type="NCBIfam" id="NF001422">
    <property type="entry name" value="PRK00296.1"/>
    <property type="match status" value="1"/>
</dbReference>
<dbReference type="Pfam" id="PF03776">
    <property type="entry name" value="MinE"/>
    <property type="match status" value="1"/>
</dbReference>
<dbReference type="SUPFAM" id="SSF55229">
    <property type="entry name" value="Cell division protein MinE topological specificity domain"/>
    <property type="match status" value="1"/>
</dbReference>